<keyword id="KW-0378">Hydrolase</keyword>
<keyword id="KW-1185">Reference proteome</keyword>
<keyword id="KW-0823">Tryptophan catabolism</keyword>
<feature type="chain" id="PRO_0000361883" description="Kynurenine formamidase">
    <location>
        <begin position="1"/>
        <end position="259"/>
    </location>
</feature>
<feature type="short sequence motif" description="HGGXW">
    <location>
        <begin position="34"/>
        <end position="38"/>
    </location>
</feature>
<feature type="active site" description="Nucleophile" evidence="1">
    <location>
        <position position="103"/>
    </location>
</feature>
<feature type="active site" evidence="1">
    <location>
        <position position="196"/>
    </location>
</feature>
<feature type="active site" evidence="1">
    <location>
        <position position="228"/>
    </location>
</feature>
<comment type="function">
    <text evidence="1">Catalyzes the hydrolysis of N-formyl-L-kynurenine to L-kynurenine, the second step in the kynurenine pathway of tryptophan degradation. Kynurenine may be further oxidized to nicotinic acid, NAD(H) and NADP(H). Required for elimination of toxic metabolites.</text>
</comment>
<comment type="catalytic activity">
    <reaction evidence="1">
        <text>N-formyl-L-kynurenine + H2O = L-kynurenine + formate + H(+)</text>
        <dbReference type="Rhea" id="RHEA:13009"/>
        <dbReference type="ChEBI" id="CHEBI:15377"/>
        <dbReference type="ChEBI" id="CHEBI:15378"/>
        <dbReference type="ChEBI" id="CHEBI:15740"/>
        <dbReference type="ChEBI" id="CHEBI:57959"/>
        <dbReference type="ChEBI" id="CHEBI:58629"/>
        <dbReference type="EC" id="3.5.1.9"/>
    </reaction>
</comment>
<comment type="pathway">
    <text evidence="1">Amino-acid degradation; L-tryptophan degradation via kynurenine pathway; L-kynurenine from L-tryptophan: step 2/2.</text>
</comment>
<comment type="subunit">
    <text evidence="1">Homodimer.</text>
</comment>
<comment type="domain">
    <text evidence="1">The main chain amide nitrogen atoms of the second glycine and its adjacent residue in the HGGXW motif define the oxyanion hole, and stabilize the oxyanion that forms during the nucleophilic attack by the catalytic serine during substrate cleavage.</text>
</comment>
<comment type="similarity">
    <text evidence="1">Belongs to the kynurenine formamidase family.</text>
</comment>
<name>KFA_PICGU</name>
<dbReference type="EC" id="3.5.1.9" evidence="1"/>
<dbReference type="EMBL" id="CH408160">
    <property type="protein sequence ID" value="EDK40881.2"/>
    <property type="molecule type" value="Genomic_DNA"/>
</dbReference>
<dbReference type="RefSeq" id="XP_001483024.1">
    <property type="nucleotide sequence ID" value="XM_001482974.1"/>
</dbReference>
<dbReference type="SMR" id="A5DNX8"/>
<dbReference type="FunCoup" id="A5DNX8">
    <property type="interactions" value="133"/>
</dbReference>
<dbReference type="STRING" id="294746.A5DNX8"/>
<dbReference type="ESTHER" id="picgu-bna7">
    <property type="family name" value="Kynurenine-formamidase"/>
</dbReference>
<dbReference type="GeneID" id="5125016"/>
<dbReference type="KEGG" id="pgu:PGUG_04979"/>
<dbReference type="VEuPathDB" id="FungiDB:PGUG_04979"/>
<dbReference type="eggNOG" id="ENOG502S28Q">
    <property type="taxonomic scope" value="Eukaryota"/>
</dbReference>
<dbReference type="HOGENOM" id="CLU_016852_1_0_1"/>
<dbReference type="InParanoid" id="A5DNX8"/>
<dbReference type="OMA" id="DHYDIMK"/>
<dbReference type="OrthoDB" id="420264at2759"/>
<dbReference type="UniPathway" id="UPA00333">
    <property type="reaction ID" value="UER00454"/>
</dbReference>
<dbReference type="Proteomes" id="UP000001997">
    <property type="component" value="Unassembled WGS sequence"/>
</dbReference>
<dbReference type="GO" id="GO:0004061">
    <property type="term" value="F:arylformamidase activity"/>
    <property type="evidence" value="ECO:0007669"/>
    <property type="project" value="UniProtKB-UniRule"/>
</dbReference>
<dbReference type="GO" id="GO:0034354">
    <property type="term" value="P:'de novo' NAD biosynthetic process from L-tryptophan"/>
    <property type="evidence" value="ECO:0007669"/>
    <property type="project" value="UniProtKB-UniRule"/>
</dbReference>
<dbReference type="GO" id="GO:0019441">
    <property type="term" value="P:L-tryptophan catabolic process to kynurenine"/>
    <property type="evidence" value="ECO:0007669"/>
    <property type="project" value="UniProtKB-UniRule"/>
</dbReference>
<dbReference type="GO" id="GO:0030307">
    <property type="term" value="P:positive regulation of cell growth"/>
    <property type="evidence" value="ECO:0007669"/>
    <property type="project" value="EnsemblFungi"/>
</dbReference>
<dbReference type="Gene3D" id="3.40.50.1820">
    <property type="entry name" value="alpha/beta hydrolase"/>
    <property type="match status" value="1"/>
</dbReference>
<dbReference type="HAMAP" id="MF_03014">
    <property type="entry name" value="KFase"/>
    <property type="match status" value="1"/>
</dbReference>
<dbReference type="InterPro" id="IPR029058">
    <property type="entry name" value="AB_hydrolase_fold"/>
</dbReference>
<dbReference type="InterPro" id="IPR049492">
    <property type="entry name" value="BD-FAE-like_dom"/>
</dbReference>
<dbReference type="InterPro" id="IPR050300">
    <property type="entry name" value="GDXG_lipolytic_enzyme"/>
</dbReference>
<dbReference type="InterPro" id="IPR027519">
    <property type="entry name" value="KFase_ver/fungi-typ"/>
</dbReference>
<dbReference type="PANTHER" id="PTHR48081">
    <property type="entry name" value="AB HYDROLASE SUPERFAMILY PROTEIN C4A8.06C"/>
    <property type="match status" value="1"/>
</dbReference>
<dbReference type="PANTHER" id="PTHR48081:SF33">
    <property type="entry name" value="KYNURENINE FORMAMIDASE"/>
    <property type="match status" value="1"/>
</dbReference>
<dbReference type="Pfam" id="PF20434">
    <property type="entry name" value="BD-FAE"/>
    <property type="match status" value="1"/>
</dbReference>
<dbReference type="SUPFAM" id="SSF53474">
    <property type="entry name" value="alpha/beta-Hydrolases"/>
    <property type="match status" value="1"/>
</dbReference>
<protein>
    <recommendedName>
        <fullName evidence="1">Kynurenine formamidase</fullName>
        <shortName evidence="1">KFA</shortName>
        <shortName evidence="1">KFase</shortName>
        <ecNumber evidence="1">3.5.1.9</ecNumber>
    </recommendedName>
    <alternativeName>
        <fullName evidence="1">Arylformamidase</fullName>
    </alternativeName>
    <alternativeName>
        <fullName evidence="1">N-formylkynurenine formamidase</fullName>
        <shortName evidence="1">FKF</shortName>
    </alternativeName>
</protein>
<accession>A5DNX8</accession>
<sequence>MSSSKLLKYGSDDLQTIRVYRHDSGNHLSIIFIHGGAWRDPRNTFNDFEELVGKLPSTINTFGINYRLSPAVKHPAHLEDVVSAIEYLAKNYKVENVGLVGHSVGATLALQILNYKTILPGLERPLGIKMKFLVFLDGIYDVPKLVEEYPTYSSFVNEAFKTKQDYMRATPVSSEMPQFDISVEKCVILLVQSTEDELLSVQQTELMADFLQAKSIPFEKHLGAFGAHEQVYRHHKVAKLITDAIGANLDGLVRARPQN</sequence>
<proteinExistence type="inferred from homology"/>
<evidence type="ECO:0000255" key="1">
    <source>
        <dbReference type="HAMAP-Rule" id="MF_03014"/>
    </source>
</evidence>
<gene>
    <name evidence="1" type="primary">BNA7</name>
    <name type="ORF">PGUG_04979</name>
</gene>
<reference key="1">
    <citation type="journal article" date="2009" name="Nature">
        <title>Evolution of pathogenicity and sexual reproduction in eight Candida genomes.</title>
        <authorList>
            <person name="Butler G."/>
            <person name="Rasmussen M.D."/>
            <person name="Lin M.F."/>
            <person name="Santos M.A.S."/>
            <person name="Sakthikumar S."/>
            <person name="Munro C.A."/>
            <person name="Rheinbay E."/>
            <person name="Grabherr M."/>
            <person name="Forche A."/>
            <person name="Reedy J.L."/>
            <person name="Agrafioti I."/>
            <person name="Arnaud M.B."/>
            <person name="Bates S."/>
            <person name="Brown A.J.P."/>
            <person name="Brunke S."/>
            <person name="Costanzo M.C."/>
            <person name="Fitzpatrick D.A."/>
            <person name="de Groot P.W.J."/>
            <person name="Harris D."/>
            <person name="Hoyer L.L."/>
            <person name="Hube B."/>
            <person name="Klis F.M."/>
            <person name="Kodira C."/>
            <person name="Lennard N."/>
            <person name="Logue M.E."/>
            <person name="Martin R."/>
            <person name="Neiman A.M."/>
            <person name="Nikolaou E."/>
            <person name="Quail M.A."/>
            <person name="Quinn J."/>
            <person name="Santos M.C."/>
            <person name="Schmitzberger F.F."/>
            <person name="Sherlock G."/>
            <person name="Shah P."/>
            <person name="Silverstein K.A.T."/>
            <person name="Skrzypek M.S."/>
            <person name="Soll D."/>
            <person name="Staggs R."/>
            <person name="Stansfield I."/>
            <person name="Stumpf M.P.H."/>
            <person name="Sudbery P.E."/>
            <person name="Srikantha T."/>
            <person name="Zeng Q."/>
            <person name="Berman J."/>
            <person name="Berriman M."/>
            <person name="Heitman J."/>
            <person name="Gow N.A.R."/>
            <person name="Lorenz M.C."/>
            <person name="Birren B.W."/>
            <person name="Kellis M."/>
            <person name="Cuomo C.A."/>
        </authorList>
    </citation>
    <scope>NUCLEOTIDE SEQUENCE [LARGE SCALE GENOMIC DNA]</scope>
    <source>
        <strain>ATCC 6260 / CBS 566 / DSM 6381 / JCM 1539 / NBRC 10279 / NRRL Y-324</strain>
    </source>
</reference>
<organism>
    <name type="scientific">Meyerozyma guilliermondii (strain ATCC 6260 / CBS 566 / DSM 6381 / JCM 1539 / NBRC 10279 / NRRL Y-324)</name>
    <name type="common">Yeast</name>
    <name type="synonym">Candida guilliermondii</name>
    <dbReference type="NCBI Taxonomy" id="294746"/>
    <lineage>
        <taxon>Eukaryota</taxon>
        <taxon>Fungi</taxon>
        <taxon>Dikarya</taxon>
        <taxon>Ascomycota</taxon>
        <taxon>Saccharomycotina</taxon>
        <taxon>Pichiomycetes</taxon>
        <taxon>Debaryomycetaceae</taxon>
        <taxon>Meyerozyma</taxon>
    </lineage>
</organism>